<organism>
    <name type="scientific">Ginkgo biloba</name>
    <name type="common">Ginkgo</name>
    <name type="synonym">Maidenhair tree</name>
    <dbReference type="NCBI Taxonomy" id="3311"/>
    <lineage>
        <taxon>Eukaryota</taxon>
        <taxon>Viridiplantae</taxon>
        <taxon>Streptophyta</taxon>
        <taxon>Embryophyta</taxon>
        <taxon>Tracheophyta</taxon>
        <taxon>Spermatophyta</taxon>
        <taxon>Ginkgoidae</taxon>
        <taxon>Ginkgoales</taxon>
        <taxon>Ginkgoaceae</taxon>
        <taxon>Ginkgo</taxon>
    </lineage>
</organism>
<proteinExistence type="inferred from homology"/>
<evidence type="ECO:0000255" key="1">
    <source>
        <dbReference type="HAMAP-Rule" id="MF_01390"/>
    </source>
</evidence>
<feature type="chain" id="PRO_0000143398" description="Maturase K">
    <location>
        <begin position="1"/>
        <end position="512"/>
    </location>
</feature>
<geneLocation type="chloroplast"/>
<protein>
    <recommendedName>
        <fullName evidence="1">Maturase K</fullName>
    </recommendedName>
    <alternativeName>
        <fullName evidence="1">Intron maturase</fullName>
    </alternativeName>
</protein>
<reference key="1">
    <citation type="submission" date="2000-06" db="EMBL/GenBank/DDBJ databases">
        <title>Chloroplast matK sequence data reconfirm the monophyly of extant gymnosperms and the coniferophytic origin of Gnetales.</title>
        <authorList>
            <person name="Chaw S.-M."/>
            <person name="Hu S.-H."/>
        </authorList>
    </citation>
    <scope>NUCLEOTIDE SEQUENCE [GENOMIC DNA]</scope>
</reference>
<dbReference type="EMBL" id="AF279806">
    <property type="protein sequence ID" value="AAK69129.1"/>
    <property type="molecule type" value="Genomic_DNA"/>
</dbReference>
<dbReference type="GO" id="GO:0009507">
    <property type="term" value="C:chloroplast"/>
    <property type="evidence" value="ECO:0007669"/>
    <property type="project" value="UniProtKB-SubCell"/>
</dbReference>
<dbReference type="GO" id="GO:0003723">
    <property type="term" value="F:RNA binding"/>
    <property type="evidence" value="ECO:0007669"/>
    <property type="project" value="UniProtKB-KW"/>
</dbReference>
<dbReference type="GO" id="GO:0006397">
    <property type="term" value="P:mRNA processing"/>
    <property type="evidence" value="ECO:0007669"/>
    <property type="project" value="UniProtKB-KW"/>
</dbReference>
<dbReference type="GO" id="GO:0008380">
    <property type="term" value="P:RNA splicing"/>
    <property type="evidence" value="ECO:0007669"/>
    <property type="project" value="UniProtKB-UniRule"/>
</dbReference>
<dbReference type="GO" id="GO:0008033">
    <property type="term" value="P:tRNA processing"/>
    <property type="evidence" value="ECO:0007669"/>
    <property type="project" value="UniProtKB-KW"/>
</dbReference>
<dbReference type="HAMAP" id="MF_01390">
    <property type="entry name" value="MatK"/>
    <property type="match status" value="1"/>
</dbReference>
<dbReference type="InterPro" id="IPR024937">
    <property type="entry name" value="Domain_X"/>
</dbReference>
<dbReference type="InterPro" id="IPR002866">
    <property type="entry name" value="Maturase_MatK"/>
</dbReference>
<dbReference type="InterPro" id="IPR024942">
    <property type="entry name" value="Maturase_MatK_N"/>
</dbReference>
<dbReference type="PANTHER" id="PTHR34811">
    <property type="entry name" value="MATURASE K"/>
    <property type="match status" value="1"/>
</dbReference>
<dbReference type="PANTHER" id="PTHR34811:SF1">
    <property type="entry name" value="MATURASE K"/>
    <property type="match status" value="1"/>
</dbReference>
<dbReference type="Pfam" id="PF01348">
    <property type="entry name" value="Intron_maturas2"/>
    <property type="match status" value="1"/>
</dbReference>
<dbReference type="Pfam" id="PF01824">
    <property type="entry name" value="MatK_N"/>
    <property type="match status" value="1"/>
</dbReference>
<accession>Q8MEX2</accession>
<gene>
    <name evidence="1" type="primary">matK</name>
</gene>
<name>MATK_GINBI</name>
<sequence>MDKFKRDGEEYISYQRRFLYPLLFQEDLYAIAYDHYFNRSSCFEPMENSSSNDRFSFLTVKRLISRIHQQNDLIISFLNCDQNPFVGHNSSFYSELVLEGPTVVLEVPFLMRSKHSLEKKNEWKSFRSIHSIFSFMEDKFPHPNSISDMRIPHSIHSEIFIRTFRRWVRDAPSLHLSRSVLHEHRNSSENLYKSILIAPEGNTKFFLFLWNYYAYECESLLVPLRKRSSHSRLLSYGAFLEQIHSYRKIEHIVIFSRRNLAKSIWSLKDSSISYVRYGERSIMALKGAHSSVRRWRYYLSIFWRCYFHFWSQPYRIRIDELSNNCSSFLGYFLGVRMNTSVVRIKMLDDLFITDLITNEFDSIAPIIPLIGLLAKERFCDISGRPISKLAWTGLKDDDILDRFDRICRNIIDYYSGSFNKDGSYRMKYILRLPCAKTLACRHKSTIRVVWEEFGSELFTKSFPKEGELISPFFSKTCSQRKRIWHSDILRINLPANFWQNKRNRQIETLFGL</sequence>
<comment type="function">
    <text evidence="1">Usually encoded in the trnK tRNA gene intron. Probably assists in splicing its own and other chloroplast group II introns.</text>
</comment>
<comment type="subcellular location">
    <subcellularLocation>
        <location>Plastid</location>
        <location>Chloroplast</location>
    </subcellularLocation>
</comment>
<comment type="similarity">
    <text evidence="1">Belongs to the intron maturase 2 family. MatK subfamily.</text>
</comment>
<keyword id="KW-0150">Chloroplast</keyword>
<keyword id="KW-0507">mRNA processing</keyword>
<keyword id="KW-0934">Plastid</keyword>
<keyword id="KW-0694">RNA-binding</keyword>
<keyword id="KW-0819">tRNA processing</keyword>